<dbReference type="EMBL" id="AL138657">
    <property type="protein sequence ID" value="CAB75489.1"/>
    <property type="molecule type" value="Genomic_DNA"/>
</dbReference>
<dbReference type="EMBL" id="CP002686">
    <property type="protein sequence ID" value="AEE78049.1"/>
    <property type="molecule type" value="Genomic_DNA"/>
</dbReference>
<dbReference type="EMBL" id="AF386960">
    <property type="protein sequence ID" value="AAK62405.1"/>
    <property type="molecule type" value="mRNA"/>
</dbReference>
<dbReference type="EMBL" id="BT006312">
    <property type="protein sequence ID" value="AAP13420.1"/>
    <property type="molecule type" value="mRNA"/>
</dbReference>
<dbReference type="PIR" id="T47500">
    <property type="entry name" value="T47500"/>
</dbReference>
<dbReference type="RefSeq" id="NP_190146.1">
    <property type="nucleotide sequence ID" value="NM_114429.2"/>
</dbReference>
<dbReference type="SMR" id="Q9M1E7"/>
<dbReference type="FunCoup" id="Q9M1E7">
    <property type="interactions" value="172"/>
</dbReference>
<dbReference type="STRING" id="3702.Q9M1E7"/>
<dbReference type="GlyCosmos" id="Q9M1E7">
    <property type="glycosylation" value="2 sites, No reported glycans"/>
</dbReference>
<dbReference type="GlyGen" id="Q9M1E7">
    <property type="glycosylation" value="2 sites"/>
</dbReference>
<dbReference type="PaxDb" id="3702-AT3G45600.1"/>
<dbReference type="ProteomicsDB" id="232743"/>
<dbReference type="EnsemblPlants" id="AT3G45600.1">
    <property type="protein sequence ID" value="AT3G45600.1"/>
    <property type="gene ID" value="AT3G45600"/>
</dbReference>
<dbReference type="GeneID" id="823702"/>
<dbReference type="Gramene" id="AT3G45600.1">
    <property type="protein sequence ID" value="AT3G45600.1"/>
    <property type="gene ID" value="AT3G45600"/>
</dbReference>
<dbReference type="KEGG" id="ath:AT3G45600"/>
<dbReference type="Araport" id="AT3G45600"/>
<dbReference type="TAIR" id="AT3G45600">
    <property type="gene designation" value="TET3"/>
</dbReference>
<dbReference type="eggNOG" id="ENOG502QU76">
    <property type="taxonomic scope" value="Eukaryota"/>
</dbReference>
<dbReference type="HOGENOM" id="CLU_066970_0_0_1"/>
<dbReference type="InParanoid" id="Q9M1E7"/>
<dbReference type="OMA" id="ADCTRWS"/>
<dbReference type="OrthoDB" id="1881997at2759"/>
<dbReference type="PhylomeDB" id="Q9M1E7"/>
<dbReference type="PRO" id="PR:Q9M1E7"/>
<dbReference type="Proteomes" id="UP000006548">
    <property type="component" value="Chromosome 3"/>
</dbReference>
<dbReference type="ExpressionAtlas" id="Q9M1E7">
    <property type="expression patterns" value="baseline and differential"/>
</dbReference>
<dbReference type="GO" id="GO:0005829">
    <property type="term" value="C:cytosol"/>
    <property type="evidence" value="ECO:0007005"/>
    <property type="project" value="TAIR"/>
</dbReference>
<dbReference type="GO" id="GO:0005886">
    <property type="term" value="C:plasma membrane"/>
    <property type="evidence" value="ECO:0007005"/>
    <property type="project" value="TAIR"/>
</dbReference>
<dbReference type="GO" id="GO:0009506">
    <property type="term" value="C:plasmodesma"/>
    <property type="evidence" value="ECO:0000314"/>
    <property type="project" value="TAIR"/>
</dbReference>
<dbReference type="GO" id="GO:0009734">
    <property type="term" value="P:auxin-activated signaling pathway"/>
    <property type="evidence" value="ECO:0007669"/>
    <property type="project" value="InterPro"/>
</dbReference>
<dbReference type="InterPro" id="IPR044991">
    <property type="entry name" value="TET_plant"/>
</dbReference>
<dbReference type="InterPro" id="IPR018499">
    <property type="entry name" value="Tetraspanin/Peripherin"/>
</dbReference>
<dbReference type="PANTHER" id="PTHR32191">
    <property type="entry name" value="TETRASPANIN-8-RELATED"/>
    <property type="match status" value="1"/>
</dbReference>
<dbReference type="Pfam" id="PF00335">
    <property type="entry name" value="Tetraspanin"/>
    <property type="match status" value="1"/>
</dbReference>
<dbReference type="PRINTS" id="PR00259">
    <property type="entry name" value="TMFOUR"/>
</dbReference>
<keyword id="KW-1003">Cell membrane</keyword>
<keyword id="KW-0325">Glycoprotein</keyword>
<keyword id="KW-0472">Membrane</keyword>
<keyword id="KW-1185">Reference proteome</keyword>
<keyword id="KW-0812">Transmembrane</keyword>
<keyword id="KW-1133">Transmembrane helix</keyword>
<evidence type="ECO:0000250" key="1"/>
<evidence type="ECO:0000255" key="2"/>
<evidence type="ECO:0000269" key="3">
    <source>
    </source>
</evidence>
<evidence type="ECO:0000305" key="4"/>
<gene>
    <name type="primary">TET3</name>
    <name type="ordered locus">At3g45600</name>
    <name type="ORF">F9K21.18</name>
</gene>
<proteinExistence type="evidence at protein level"/>
<protein>
    <recommendedName>
        <fullName>Tetraspanin-3</fullName>
    </recommendedName>
</protein>
<comment type="function">
    <text evidence="1">May be involved in the regulation of cell differentiation.</text>
</comment>
<comment type="subcellular location">
    <subcellularLocation>
        <location evidence="3">Cell membrane</location>
        <topology evidence="2">Multi-pass membrane protein</topology>
    </subcellularLocation>
</comment>
<comment type="similarity">
    <text evidence="4">Belongs to the tetraspanin (TM4SF) family.</text>
</comment>
<name>TET3_ARATH</name>
<reference key="1">
    <citation type="journal article" date="2000" name="Nature">
        <title>Sequence and analysis of chromosome 3 of the plant Arabidopsis thaliana.</title>
        <authorList>
            <person name="Salanoubat M."/>
            <person name="Lemcke K."/>
            <person name="Rieger M."/>
            <person name="Ansorge W."/>
            <person name="Unseld M."/>
            <person name="Fartmann B."/>
            <person name="Valle G."/>
            <person name="Bloecker H."/>
            <person name="Perez-Alonso M."/>
            <person name="Obermaier B."/>
            <person name="Delseny M."/>
            <person name="Boutry M."/>
            <person name="Grivell L.A."/>
            <person name="Mache R."/>
            <person name="Puigdomenech P."/>
            <person name="De Simone V."/>
            <person name="Choisne N."/>
            <person name="Artiguenave F."/>
            <person name="Robert C."/>
            <person name="Brottier P."/>
            <person name="Wincker P."/>
            <person name="Cattolico L."/>
            <person name="Weissenbach J."/>
            <person name="Saurin W."/>
            <person name="Quetier F."/>
            <person name="Schaefer M."/>
            <person name="Mueller-Auer S."/>
            <person name="Gabel C."/>
            <person name="Fuchs M."/>
            <person name="Benes V."/>
            <person name="Wurmbach E."/>
            <person name="Drzonek H."/>
            <person name="Erfle H."/>
            <person name="Jordan N."/>
            <person name="Bangert S."/>
            <person name="Wiedelmann R."/>
            <person name="Kranz H."/>
            <person name="Voss H."/>
            <person name="Holland R."/>
            <person name="Brandt P."/>
            <person name="Nyakatura G."/>
            <person name="Vezzi A."/>
            <person name="D'Angelo M."/>
            <person name="Pallavicini A."/>
            <person name="Toppo S."/>
            <person name="Simionati B."/>
            <person name="Conrad A."/>
            <person name="Hornischer K."/>
            <person name="Kauer G."/>
            <person name="Loehnert T.-H."/>
            <person name="Nordsiek G."/>
            <person name="Reichelt J."/>
            <person name="Scharfe M."/>
            <person name="Schoen O."/>
            <person name="Bargues M."/>
            <person name="Terol J."/>
            <person name="Climent J."/>
            <person name="Navarro P."/>
            <person name="Collado C."/>
            <person name="Perez-Perez A."/>
            <person name="Ottenwaelder B."/>
            <person name="Duchemin D."/>
            <person name="Cooke R."/>
            <person name="Laudie M."/>
            <person name="Berger-Llauro C."/>
            <person name="Purnelle B."/>
            <person name="Masuy D."/>
            <person name="de Haan M."/>
            <person name="Maarse A.C."/>
            <person name="Alcaraz J.-P."/>
            <person name="Cottet A."/>
            <person name="Casacuberta E."/>
            <person name="Monfort A."/>
            <person name="Argiriou A."/>
            <person name="Flores M."/>
            <person name="Liguori R."/>
            <person name="Vitale D."/>
            <person name="Mannhaupt G."/>
            <person name="Haase D."/>
            <person name="Schoof H."/>
            <person name="Rudd S."/>
            <person name="Zaccaria P."/>
            <person name="Mewes H.-W."/>
            <person name="Mayer K.F.X."/>
            <person name="Kaul S."/>
            <person name="Town C.D."/>
            <person name="Koo H.L."/>
            <person name="Tallon L.J."/>
            <person name="Jenkins J."/>
            <person name="Rooney T."/>
            <person name="Rizzo M."/>
            <person name="Walts A."/>
            <person name="Utterback T."/>
            <person name="Fujii C.Y."/>
            <person name="Shea T.P."/>
            <person name="Creasy T.H."/>
            <person name="Haas B."/>
            <person name="Maiti R."/>
            <person name="Wu D."/>
            <person name="Peterson J."/>
            <person name="Van Aken S."/>
            <person name="Pai G."/>
            <person name="Militscher J."/>
            <person name="Sellers P."/>
            <person name="Gill J.E."/>
            <person name="Feldblyum T.V."/>
            <person name="Preuss D."/>
            <person name="Lin X."/>
            <person name="Nierman W.C."/>
            <person name="Salzberg S.L."/>
            <person name="White O."/>
            <person name="Venter J.C."/>
            <person name="Fraser C.M."/>
            <person name="Kaneko T."/>
            <person name="Nakamura Y."/>
            <person name="Sato S."/>
            <person name="Kato T."/>
            <person name="Asamizu E."/>
            <person name="Sasamoto S."/>
            <person name="Kimura T."/>
            <person name="Idesawa K."/>
            <person name="Kawashima K."/>
            <person name="Kishida Y."/>
            <person name="Kiyokawa C."/>
            <person name="Kohara M."/>
            <person name="Matsumoto M."/>
            <person name="Matsuno A."/>
            <person name="Muraki A."/>
            <person name="Nakayama S."/>
            <person name="Nakazaki N."/>
            <person name="Shinpo S."/>
            <person name="Takeuchi C."/>
            <person name="Wada T."/>
            <person name="Watanabe A."/>
            <person name="Yamada M."/>
            <person name="Yasuda M."/>
            <person name="Tabata S."/>
        </authorList>
    </citation>
    <scope>NUCLEOTIDE SEQUENCE [LARGE SCALE GENOMIC DNA]</scope>
    <source>
        <strain>cv. Columbia</strain>
    </source>
</reference>
<reference key="2">
    <citation type="journal article" date="2017" name="Plant J.">
        <title>Araport11: a complete reannotation of the Arabidopsis thaliana reference genome.</title>
        <authorList>
            <person name="Cheng C.Y."/>
            <person name="Krishnakumar V."/>
            <person name="Chan A.P."/>
            <person name="Thibaud-Nissen F."/>
            <person name="Schobel S."/>
            <person name="Town C.D."/>
        </authorList>
    </citation>
    <scope>GENOME REANNOTATION</scope>
    <source>
        <strain>cv. Columbia</strain>
    </source>
</reference>
<reference key="3">
    <citation type="journal article" date="2003" name="Science">
        <title>Empirical analysis of transcriptional activity in the Arabidopsis genome.</title>
        <authorList>
            <person name="Yamada K."/>
            <person name="Lim J."/>
            <person name="Dale J.M."/>
            <person name="Chen H."/>
            <person name="Shinn P."/>
            <person name="Palm C.J."/>
            <person name="Southwick A.M."/>
            <person name="Wu H.C."/>
            <person name="Kim C.J."/>
            <person name="Nguyen M."/>
            <person name="Pham P.K."/>
            <person name="Cheuk R.F."/>
            <person name="Karlin-Newmann G."/>
            <person name="Liu S.X."/>
            <person name="Lam B."/>
            <person name="Sakano H."/>
            <person name="Wu T."/>
            <person name="Yu G."/>
            <person name="Miranda M."/>
            <person name="Quach H.L."/>
            <person name="Tripp M."/>
            <person name="Chang C.H."/>
            <person name="Lee J.M."/>
            <person name="Toriumi M.J."/>
            <person name="Chan M.M."/>
            <person name="Tang C.C."/>
            <person name="Onodera C.S."/>
            <person name="Deng J.M."/>
            <person name="Akiyama K."/>
            <person name="Ansari Y."/>
            <person name="Arakawa T."/>
            <person name="Banh J."/>
            <person name="Banno F."/>
            <person name="Bowser L."/>
            <person name="Brooks S.Y."/>
            <person name="Carninci P."/>
            <person name="Chao Q."/>
            <person name="Choy N."/>
            <person name="Enju A."/>
            <person name="Goldsmith A.D."/>
            <person name="Gurjal M."/>
            <person name="Hansen N.F."/>
            <person name="Hayashizaki Y."/>
            <person name="Johnson-Hopson C."/>
            <person name="Hsuan V.W."/>
            <person name="Iida K."/>
            <person name="Karnes M."/>
            <person name="Khan S."/>
            <person name="Koesema E."/>
            <person name="Ishida J."/>
            <person name="Jiang P.X."/>
            <person name="Jones T."/>
            <person name="Kawai J."/>
            <person name="Kamiya A."/>
            <person name="Meyers C."/>
            <person name="Nakajima M."/>
            <person name="Narusaka M."/>
            <person name="Seki M."/>
            <person name="Sakurai T."/>
            <person name="Satou M."/>
            <person name="Tamse R."/>
            <person name="Vaysberg M."/>
            <person name="Wallender E.K."/>
            <person name="Wong C."/>
            <person name="Yamamura Y."/>
            <person name="Yuan S."/>
            <person name="Shinozaki K."/>
            <person name="Davis R.W."/>
            <person name="Theologis A."/>
            <person name="Ecker J.R."/>
        </authorList>
    </citation>
    <scope>NUCLEOTIDE SEQUENCE [LARGE SCALE MRNA]</scope>
    <source>
        <strain>cv. Columbia</strain>
    </source>
</reference>
<reference key="4">
    <citation type="journal article" date="2004" name="Mol. Cell. Proteomics">
        <title>Identification of new intrinsic proteins in Arabidopsis plasma membrane proteome.</title>
        <authorList>
            <person name="Marmagne A."/>
            <person name="Rouet M.-A."/>
            <person name="Ferro M."/>
            <person name="Rolland N."/>
            <person name="Alcon C."/>
            <person name="Joyard J."/>
            <person name="Garin J."/>
            <person name="Barbier-Brygoo H."/>
            <person name="Ephritikhine G."/>
        </authorList>
    </citation>
    <scope>IDENTIFICATION BY MASS SPECTROMETRY</scope>
    <scope>SUBCELLULAR LOCATION [LARGE SCALE ANALYSIS]</scope>
</reference>
<accession>Q9M1E7</accession>
<feature type="chain" id="PRO_0000421043" description="Tetraspanin-3">
    <location>
        <begin position="1"/>
        <end position="285"/>
    </location>
</feature>
<feature type="topological domain" description="Cytoplasmic" evidence="2">
    <location>
        <begin position="1"/>
        <end position="6"/>
    </location>
</feature>
<feature type="transmembrane region" description="Helical" evidence="2">
    <location>
        <begin position="7"/>
        <end position="27"/>
    </location>
</feature>
<feature type="topological domain" description="Extracellular" evidence="2">
    <location>
        <begin position="28"/>
        <end position="43"/>
    </location>
</feature>
<feature type="transmembrane region" description="Helical" evidence="2">
    <location>
        <begin position="44"/>
        <end position="64"/>
    </location>
</feature>
<feature type="topological domain" description="Cytoplasmic" evidence="2">
    <location>
        <begin position="65"/>
        <end position="71"/>
    </location>
</feature>
<feature type="transmembrane region" description="Helical" evidence="2">
    <location>
        <begin position="72"/>
        <end position="92"/>
    </location>
</feature>
<feature type="topological domain" description="Extracellular" evidence="2">
    <location>
        <begin position="93"/>
        <end position="235"/>
    </location>
</feature>
<feature type="transmembrane region" description="Helical" evidence="2">
    <location>
        <begin position="236"/>
        <end position="256"/>
    </location>
</feature>
<feature type="topological domain" description="Cytoplasmic" evidence="2">
    <location>
        <begin position="257"/>
        <end position="285"/>
    </location>
</feature>
<feature type="glycosylation site" description="N-linked (GlcNAc...) asparagine" evidence="2">
    <location>
        <position position="34"/>
    </location>
</feature>
<feature type="glycosylation site" description="N-linked (GlcNAc...) asparagine" evidence="2">
    <location>
        <position position="187"/>
    </location>
</feature>
<organism>
    <name type="scientific">Arabidopsis thaliana</name>
    <name type="common">Mouse-ear cress</name>
    <dbReference type="NCBI Taxonomy" id="3702"/>
    <lineage>
        <taxon>Eukaryota</taxon>
        <taxon>Viridiplantae</taxon>
        <taxon>Streptophyta</taxon>
        <taxon>Embryophyta</taxon>
        <taxon>Tracheophyta</taxon>
        <taxon>Spermatophyta</taxon>
        <taxon>Magnoliopsida</taxon>
        <taxon>eudicotyledons</taxon>
        <taxon>Gunneridae</taxon>
        <taxon>Pentapetalae</taxon>
        <taxon>rosids</taxon>
        <taxon>malvids</taxon>
        <taxon>Brassicales</taxon>
        <taxon>Brassicaceae</taxon>
        <taxon>Camelineae</taxon>
        <taxon>Arabidopsis</taxon>
    </lineage>
</organism>
<sequence length="285" mass="31888">MRTSNHLIGLVNFLTFLLSIPILGGGIWLSSRANSTDCLRFLQWPLIVIGISIMVVSLAGFAGACYRNKFLMWLYLVVMLLIIAALIGFIIFAYAVTDKGSGRTVLNRGYLDYYLEDYSGWLKDRVSDDSYWGKISSCLRDSGACRKIGRNFNGVPETADMFFLRRLSPVESGCCKPPTDCGFSYVNETGWDTRGGMIGPNQDCMVWSNDQSMLCYQCSSCKAGVLGSLKKSWRKVSVINIVVLIILVIFYVIAYAAYRNVKRIDNDEPAGEARMTKSHPSHFHL</sequence>